<comment type="function">
    <text evidence="3">Collaborates with REM4.1 to positively regulate the BCTV and BSCTV susceptibility.</text>
</comment>
<comment type="subunit">
    <text evidence="3">Forms homodimer and heterodimer with REM4.1 (PubMed:25289013). Interacts with KIN11 (PubMed:25289013).</text>
</comment>
<comment type="subcellular location">
    <subcellularLocation>
        <location evidence="3">Cell membrane</location>
    </subcellularLocation>
</comment>
<comment type="tissue specificity">
    <text evidence="3">Predominantly detected in bud, stem, root, flower, silique, and leaves, and enhanced dramatically in senescence leaf.</text>
</comment>
<comment type="induction">
    <text evidence="3">Induced by mannitol, NaCl, drought, as well exogenous abscisic acid (ABA) application.</text>
</comment>
<comment type="PTM">
    <text evidence="3">Probably ubiquitinated and degraded by the 26S proteasome pathway.</text>
</comment>
<comment type="disruption phenotype">
    <text evidence="3">Slightly reduced susceptibility to Beet Curly Top Virus and Beet Severe Curly Top Virus. The double mutant rem4.1 rem4.2 displays resistance to BCTV and BSCTV.</text>
</comment>
<comment type="similarity">
    <text evidence="5">Belongs to the remorin family.</text>
</comment>
<name>RMR42_ARATH</name>
<dbReference type="EMBL" id="AC002339">
    <property type="protein sequence ID" value="AAM14826.1"/>
    <property type="molecule type" value="Genomic_DNA"/>
</dbReference>
<dbReference type="EMBL" id="U90439">
    <property type="protein sequence ID" value="AAB63554.1"/>
    <property type="molecule type" value="Genomic_DNA"/>
</dbReference>
<dbReference type="EMBL" id="CP002685">
    <property type="protein sequence ID" value="AEC10043.1"/>
    <property type="molecule type" value="Genomic_DNA"/>
</dbReference>
<dbReference type="EMBL" id="AF326883">
    <property type="protein sequence ID" value="AAG41465.1"/>
    <property type="molecule type" value="mRNA"/>
</dbReference>
<dbReference type="EMBL" id="AF339703">
    <property type="protein sequence ID" value="AAK00385.1"/>
    <property type="molecule type" value="mRNA"/>
</dbReference>
<dbReference type="EMBL" id="BT000793">
    <property type="protein sequence ID" value="AAN31932.1"/>
    <property type="molecule type" value="mRNA"/>
</dbReference>
<dbReference type="PIR" id="B84847">
    <property type="entry name" value="B84847"/>
</dbReference>
<dbReference type="RefSeq" id="NP_181718.1">
    <property type="nucleotide sequence ID" value="NM_129751.2"/>
</dbReference>
<dbReference type="SMR" id="P93758"/>
<dbReference type="FunCoup" id="P93758">
    <property type="interactions" value="88"/>
</dbReference>
<dbReference type="IntAct" id="P93758">
    <property type="interactions" value="2"/>
</dbReference>
<dbReference type="STRING" id="3702.P93758"/>
<dbReference type="iPTMnet" id="P93758"/>
<dbReference type="PaxDb" id="3702-AT2G41870.1"/>
<dbReference type="ProteomicsDB" id="228141"/>
<dbReference type="EnsemblPlants" id="AT2G41870.1">
    <property type="protein sequence ID" value="AT2G41870.1"/>
    <property type="gene ID" value="AT2G41870"/>
</dbReference>
<dbReference type="GeneID" id="818787"/>
<dbReference type="Gramene" id="AT2G41870.1">
    <property type="protein sequence ID" value="AT2G41870.1"/>
    <property type="gene ID" value="AT2G41870"/>
</dbReference>
<dbReference type="KEGG" id="ath:AT2G41870"/>
<dbReference type="Araport" id="AT2G41870"/>
<dbReference type="TAIR" id="AT2G41870">
    <property type="gene designation" value="REM4.2"/>
</dbReference>
<dbReference type="eggNOG" id="ENOG502QTT4">
    <property type="taxonomic scope" value="Eukaryota"/>
</dbReference>
<dbReference type="HOGENOM" id="CLU_053612_1_0_1"/>
<dbReference type="InParanoid" id="P93758"/>
<dbReference type="OMA" id="NGWVNEQ"/>
<dbReference type="PhylomeDB" id="P93758"/>
<dbReference type="PRO" id="PR:P93758"/>
<dbReference type="Proteomes" id="UP000006548">
    <property type="component" value="Chromosome 2"/>
</dbReference>
<dbReference type="ExpressionAtlas" id="P93758">
    <property type="expression patterns" value="baseline and differential"/>
</dbReference>
<dbReference type="GO" id="GO:0005886">
    <property type="term" value="C:plasma membrane"/>
    <property type="evidence" value="ECO:0000314"/>
    <property type="project" value="UniProtKB"/>
</dbReference>
<dbReference type="GO" id="GO:0019900">
    <property type="term" value="F:kinase binding"/>
    <property type="evidence" value="ECO:0000353"/>
    <property type="project" value="UniProtKB"/>
</dbReference>
<dbReference type="GO" id="GO:0009737">
    <property type="term" value="P:response to abscisic acid"/>
    <property type="evidence" value="ECO:0000270"/>
    <property type="project" value="UniProtKB"/>
</dbReference>
<dbReference type="GO" id="GO:0010555">
    <property type="term" value="P:response to mannitol"/>
    <property type="evidence" value="ECO:0000270"/>
    <property type="project" value="UniProtKB"/>
</dbReference>
<dbReference type="GO" id="GO:0009651">
    <property type="term" value="P:response to salt stress"/>
    <property type="evidence" value="ECO:0000270"/>
    <property type="project" value="UniProtKB"/>
</dbReference>
<dbReference type="GO" id="GO:0009414">
    <property type="term" value="P:response to water deprivation"/>
    <property type="evidence" value="ECO:0000270"/>
    <property type="project" value="UniProtKB"/>
</dbReference>
<dbReference type="InterPro" id="IPR005516">
    <property type="entry name" value="Remorin_C"/>
</dbReference>
<dbReference type="PANTHER" id="PTHR31471">
    <property type="entry name" value="OS02G0116800 PROTEIN"/>
    <property type="match status" value="1"/>
</dbReference>
<dbReference type="PANTHER" id="PTHR31471:SF87">
    <property type="entry name" value="REMORIN 4.2"/>
    <property type="match status" value="1"/>
</dbReference>
<dbReference type="Pfam" id="PF03763">
    <property type="entry name" value="Remorin_C"/>
    <property type="match status" value="1"/>
</dbReference>
<gene>
    <name evidence="4" type="primary">REM4.2</name>
    <name evidence="6" type="ordered locus">At2g41870</name>
    <name evidence="8" type="ORF">T11A7.23</name>
    <name evidence="7" type="ORF">T6D20.22</name>
</gene>
<proteinExistence type="evidence at protein level"/>
<sequence>MLTLYHQERSPDATSNDRDETPETVVREVHALTPAPEDNSRTMTATLPPPPAFRGYFSPPRSATTMSEGENFTTISREFNALVIAGSSMENNELMTRDVTQREDERQDELMRIHEDTDHEEETNPLAIVPDQYPGSGLDPGSDNGPGQSRVGSTVQRVKREEVEAKITAWQTAKLAKINNRFKREDAVINGWFNEQVNKANSWMKKIERKLEERKAKAMEKTQNNVAKAQRKAEERRATAEAKRGTEVAKVVEVANLMRALGRPPAKRSFFSFS</sequence>
<keyword id="KW-1003">Cell membrane</keyword>
<keyword id="KW-0175">Coiled coil</keyword>
<keyword id="KW-0472">Membrane</keyword>
<keyword id="KW-1185">Reference proteome</keyword>
<keyword id="KW-0832">Ubl conjugation</keyword>
<feature type="chain" id="PRO_0000445511" description="Remorin 4.2">
    <location>
        <begin position="1"/>
        <end position="274"/>
    </location>
</feature>
<feature type="region of interest" description="Disordered" evidence="2">
    <location>
        <begin position="1"/>
        <end position="71"/>
    </location>
</feature>
<feature type="region of interest" description="Disordered" evidence="2">
    <location>
        <begin position="117"/>
        <end position="157"/>
    </location>
</feature>
<feature type="region of interest" description="Disordered" evidence="2">
    <location>
        <begin position="218"/>
        <end position="245"/>
    </location>
</feature>
<feature type="coiled-coil region" evidence="1">
    <location>
        <begin position="204"/>
        <end position="239"/>
    </location>
</feature>
<feature type="compositionally biased region" description="Basic and acidic residues" evidence="2">
    <location>
        <begin position="1"/>
        <end position="30"/>
    </location>
</feature>
<feature type="compositionally biased region" description="Polar residues" evidence="2">
    <location>
        <begin position="61"/>
        <end position="71"/>
    </location>
</feature>
<feature type="compositionally biased region" description="Polar residues" evidence="2">
    <location>
        <begin position="145"/>
        <end position="156"/>
    </location>
</feature>
<feature type="compositionally biased region" description="Basic and acidic residues" evidence="2">
    <location>
        <begin position="231"/>
        <end position="245"/>
    </location>
</feature>
<accession>P93758</accession>
<accession>Q8H138</accession>
<protein>
    <recommendedName>
        <fullName evidence="5">Remorin 4.2</fullName>
        <shortName evidence="4">AtREM4.2</shortName>
    </recommendedName>
    <alternativeName>
        <fullName evidence="5">Remorin group 4 member 2</fullName>
    </alternativeName>
</protein>
<evidence type="ECO:0000255" key="1"/>
<evidence type="ECO:0000256" key="2">
    <source>
        <dbReference type="SAM" id="MobiDB-lite"/>
    </source>
</evidence>
<evidence type="ECO:0000269" key="3">
    <source>
    </source>
</evidence>
<evidence type="ECO:0000303" key="4">
    <source>
    </source>
</evidence>
<evidence type="ECO:0000305" key="5"/>
<evidence type="ECO:0000312" key="6">
    <source>
        <dbReference type="Araport" id="AT2G41870"/>
    </source>
</evidence>
<evidence type="ECO:0000312" key="7">
    <source>
        <dbReference type="EMBL" id="AAB63554.1"/>
    </source>
</evidence>
<evidence type="ECO:0000312" key="8">
    <source>
        <dbReference type="EMBL" id="AAM14826.1"/>
    </source>
</evidence>
<reference key="1">
    <citation type="journal article" date="1999" name="Nature">
        <title>Sequence and analysis of chromosome 2 of the plant Arabidopsis thaliana.</title>
        <authorList>
            <person name="Lin X."/>
            <person name="Kaul S."/>
            <person name="Rounsley S.D."/>
            <person name="Shea T.P."/>
            <person name="Benito M.-I."/>
            <person name="Town C.D."/>
            <person name="Fujii C.Y."/>
            <person name="Mason T.M."/>
            <person name="Bowman C.L."/>
            <person name="Barnstead M.E."/>
            <person name="Feldblyum T.V."/>
            <person name="Buell C.R."/>
            <person name="Ketchum K.A."/>
            <person name="Lee J.J."/>
            <person name="Ronning C.M."/>
            <person name="Koo H.L."/>
            <person name="Moffat K.S."/>
            <person name="Cronin L.A."/>
            <person name="Shen M."/>
            <person name="Pai G."/>
            <person name="Van Aken S."/>
            <person name="Umayam L."/>
            <person name="Tallon L.J."/>
            <person name="Gill J.E."/>
            <person name="Adams M.D."/>
            <person name="Carrera A.J."/>
            <person name="Creasy T.H."/>
            <person name="Goodman H.M."/>
            <person name="Somerville C.R."/>
            <person name="Copenhaver G.P."/>
            <person name="Preuss D."/>
            <person name="Nierman W.C."/>
            <person name="White O."/>
            <person name="Eisen J.A."/>
            <person name="Salzberg S.L."/>
            <person name="Fraser C.M."/>
            <person name="Venter J.C."/>
        </authorList>
    </citation>
    <scope>NUCLEOTIDE SEQUENCE [LARGE SCALE GENOMIC DNA]</scope>
    <source>
        <strain>cv. Columbia</strain>
    </source>
</reference>
<reference key="2">
    <citation type="journal article" date="2017" name="Plant J.">
        <title>Araport11: a complete reannotation of the Arabidopsis thaliana reference genome.</title>
        <authorList>
            <person name="Cheng C.Y."/>
            <person name="Krishnakumar V."/>
            <person name="Chan A.P."/>
            <person name="Thibaud-Nissen F."/>
            <person name="Schobel S."/>
            <person name="Town C.D."/>
        </authorList>
    </citation>
    <scope>GENOME REANNOTATION</scope>
    <source>
        <strain>cv. Columbia</strain>
    </source>
</reference>
<reference key="3">
    <citation type="journal article" date="2003" name="Science">
        <title>Empirical analysis of transcriptional activity in the Arabidopsis genome.</title>
        <authorList>
            <person name="Yamada K."/>
            <person name="Lim J."/>
            <person name="Dale J.M."/>
            <person name="Chen H."/>
            <person name="Shinn P."/>
            <person name="Palm C.J."/>
            <person name="Southwick A.M."/>
            <person name="Wu H.C."/>
            <person name="Kim C.J."/>
            <person name="Nguyen M."/>
            <person name="Pham P.K."/>
            <person name="Cheuk R.F."/>
            <person name="Karlin-Newmann G."/>
            <person name="Liu S.X."/>
            <person name="Lam B."/>
            <person name="Sakano H."/>
            <person name="Wu T."/>
            <person name="Yu G."/>
            <person name="Miranda M."/>
            <person name="Quach H.L."/>
            <person name="Tripp M."/>
            <person name="Chang C.H."/>
            <person name="Lee J.M."/>
            <person name="Toriumi M.J."/>
            <person name="Chan M.M."/>
            <person name="Tang C.C."/>
            <person name="Onodera C.S."/>
            <person name="Deng J.M."/>
            <person name="Akiyama K."/>
            <person name="Ansari Y."/>
            <person name="Arakawa T."/>
            <person name="Banh J."/>
            <person name="Banno F."/>
            <person name="Bowser L."/>
            <person name="Brooks S.Y."/>
            <person name="Carninci P."/>
            <person name="Chao Q."/>
            <person name="Choy N."/>
            <person name="Enju A."/>
            <person name="Goldsmith A.D."/>
            <person name="Gurjal M."/>
            <person name="Hansen N.F."/>
            <person name="Hayashizaki Y."/>
            <person name="Johnson-Hopson C."/>
            <person name="Hsuan V.W."/>
            <person name="Iida K."/>
            <person name="Karnes M."/>
            <person name="Khan S."/>
            <person name="Koesema E."/>
            <person name="Ishida J."/>
            <person name="Jiang P.X."/>
            <person name="Jones T."/>
            <person name="Kawai J."/>
            <person name="Kamiya A."/>
            <person name="Meyers C."/>
            <person name="Nakajima M."/>
            <person name="Narusaka M."/>
            <person name="Seki M."/>
            <person name="Sakurai T."/>
            <person name="Satou M."/>
            <person name="Tamse R."/>
            <person name="Vaysberg M."/>
            <person name="Wallender E.K."/>
            <person name="Wong C."/>
            <person name="Yamamura Y."/>
            <person name="Yuan S."/>
            <person name="Shinozaki K."/>
            <person name="Davis R.W."/>
            <person name="Theologis A."/>
            <person name="Ecker J.R."/>
        </authorList>
    </citation>
    <scope>NUCLEOTIDE SEQUENCE [LARGE SCALE MRNA]</scope>
    <source>
        <strain>cv. Columbia</strain>
    </source>
</reference>
<reference key="4">
    <citation type="journal article" date="2007" name="Plant Physiol.">
        <title>Genome-wide annotation of remorins, a plant-specific protein family: evolutionary and functional perspectives.</title>
        <authorList>
            <person name="Raffaele S."/>
            <person name="Mongrand S."/>
            <person name="Gamas P."/>
            <person name="Niebel A."/>
            <person name="Ott T."/>
        </authorList>
    </citation>
    <scope>GENE FAMILY</scope>
</reference>
<reference key="5">
    <citation type="journal article" date="2014" name="Plant Pathol. J.">
        <title>Arabidopsis thaliana remorins interact with SnRK1 and play a role in susceptibility to Beet Curly Top Virus and Beet Severe Curly Top Virus.</title>
        <authorList>
            <person name="Son S."/>
            <person name="Oh C.J."/>
            <person name="An C.S."/>
        </authorList>
    </citation>
    <scope>INDUCTION</scope>
    <scope>TISSUE SPECIFICITY</scope>
    <scope>SUBCELLULAR LOCATION</scope>
    <scope>SUBUNIT</scope>
    <scope>INTERACTION WITH REM4.1 AND KIN11</scope>
    <scope>DISRUPTION PHENOTYPE</scope>
    <scope>FUNCTION</scope>
</reference>
<organism>
    <name type="scientific">Arabidopsis thaliana</name>
    <name type="common">Mouse-ear cress</name>
    <dbReference type="NCBI Taxonomy" id="3702"/>
    <lineage>
        <taxon>Eukaryota</taxon>
        <taxon>Viridiplantae</taxon>
        <taxon>Streptophyta</taxon>
        <taxon>Embryophyta</taxon>
        <taxon>Tracheophyta</taxon>
        <taxon>Spermatophyta</taxon>
        <taxon>Magnoliopsida</taxon>
        <taxon>eudicotyledons</taxon>
        <taxon>Gunneridae</taxon>
        <taxon>Pentapetalae</taxon>
        <taxon>rosids</taxon>
        <taxon>malvids</taxon>
        <taxon>Brassicales</taxon>
        <taxon>Brassicaceae</taxon>
        <taxon>Camelineae</taxon>
        <taxon>Arabidopsis</taxon>
    </lineage>
</organism>